<accession>Q2IXD3</accession>
<gene>
    <name evidence="1" type="primary">plsY</name>
    <name type="ordered locus">RPB_2422</name>
</gene>
<proteinExistence type="inferred from homology"/>
<keyword id="KW-0997">Cell inner membrane</keyword>
<keyword id="KW-1003">Cell membrane</keyword>
<keyword id="KW-0444">Lipid biosynthesis</keyword>
<keyword id="KW-0443">Lipid metabolism</keyword>
<keyword id="KW-0472">Membrane</keyword>
<keyword id="KW-0594">Phospholipid biosynthesis</keyword>
<keyword id="KW-1208">Phospholipid metabolism</keyword>
<keyword id="KW-1185">Reference proteome</keyword>
<keyword id="KW-0808">Transferase</keyword>
<keyword id="KW-0812">Transmembrane</keyword>
<keyword id="KW-1133">Transmembrane helix</keyword>
<comment type="function">
    <text evidence="1">Catalyzes the transfer of an acyl group from acyl-phosphate (acyl-PO(4)) to glycerol-3-phosphate (G3P) to form lysophosphatidic acid (LPA). This enzyme utilizes acyl-phosphate as fatty acyl donor, but not acyl-CoA or acyl-ACP.</text>
</comment>
<comment type="catalytic activity">
    <reaction evidence="1">
        <text>an acyl phosphate + sn-glycerol 3-phosphate = a 1-acyl-sn-glycero-3-phosphate + phosphate</text>
        <dbReference type="Rhea" id="RHEA:34075"/>
        <dbReference type="ChEBI" id="CHEBI:43474"/>
        <dbReference type="ChEBI" id="CHEBI:57597"/>
        <dbReference type="ChEBI" id="CHEBI:57970"/>
        <dbReference type="ChEBI" id="CHEBI:59918"/>
        <dbReference type="EC" id="2.3.1.275"/>
    </reaction>
</comment>
<comment type="pathway">
    <text evidence="1">Lipid metabolism; phospholipid metabolism.</text>
</comment>
<comment type="subunit">
    <text evidence="1">Probably interacts with PlsX.</text>
</comment>
<comment type="subcellular location">
    <subcellularLocation>
        <location evidence="1">Cell inner membrane</location>
        <topology evidence="1">Multi-pass membrane protein</topology>
    </subcellularLocation>
</comment>
<comment type="similarity">
    <text evidence="1">Belongs to the PlsY family.</text>
</comment>
<dbReference type="EC" id="2.3.1.275" evidence="1"/>
<dbReference type="EMBL" id="CP000250">
    <property type="protein sequence ID" value="ABD07127.1"/>
    <property type="molecule type" value="Genomic_DNA"/>
</dbReference>
<dbReference type="RefSeq" id="WP_011441312.1">
    <property type="nucleotide sequence ID" value="NC_007778.1"/>
</dbReference>
<dbReference type="SMR" id="Q2IXD3"/>
<dbReference type="STRING" id="316058.RPB_2422"/>
<dbReference type="KEGG" id="rpb:RPB_2422"/>
<dbReference type="eggNOG" id="COG0344">
    <property type="taxonomic scope" value="Bacteria"/>
</dbReference>
<dbReference type="HOGENOM" id="CLU_081254_1_0_5"/>
<dbReference type="OrthoDB" id="9777124at2"/>
<dbReference type="UniPathway" id="UPA00085"/>
<dbReference type="Proteomes" id="UP000008809">
    <property type="component" value="Chromosome"/>
</dbReference>
<dbReference type="GO" id="GO:0005886">
    <property type="term" value="C:plasma membrane"/>
    <property type="evidence" value="ECO:0007669"/>
    <property type="project" value="UniProtKB-SubCell"/>
</dbReference>
<dbReference type="GO" id="GO:0043772">
    <property type="term" value="F:acyl-phosphate glycerol-3-phosphate acyltransferase activity"/>
    <property type="evidence" value="ECO:0007669"/>
    <property type="project" value="UniProtKB-UniRule"/>
</dbReference>
<dbReference type="GO" id="GO:0008654">
    <property type="term" value="P:phospholipid biosynthetic process"/>
    <property type="evidence" value="ECO:0007669"/>
    <property type="project" value="UniProtKB-UniRule"/>
</dbReference>
<dbReference type="HAMAP" id="MF_01043">
    <property type="entry name" value="PlsY"/>
    <property type="match status" value="1"/>
</dbReference>
<dbReference type="InterPro" id="IPR003811">
    <property type="entry name" value="G3P_acylTferase_PlsY"/>
</dbReference>
<dbReference type="NCBIfam" id="TIGR00023">
    <property type="entry name" value="glycerol-3-phosphate 1-O-acyltransferase PlsY"/>
    <property type="match status" value="1"/>
</dbReference>
<dbReference type="PANTHER" id="PTHR30309:SF0">
    <property type="entry name" value="GLYCEROL-3-PHOSPHATE ACYLTRANSFERASE-RELATED"/>
    <property type="match status" value="1"/>
</dbReference>
<dbReference type="PANTHER" id="PTHR30309">
    <property type="entry name" value="INNER MEMBRANE PROTEIN YGIH"/>
    <property type="match status" value="1"/>
</dbReference>
<dbReference type="Pfam" id="PF02660">
    <property type="entry name" value="G3P_acyltransf"/>
    <property type="match status" value="1"/>
</dbReference>
<dbReference type="SMART" id="SM01207">
    <property type="entry name" value="G3P_acyltransf"/>
    <property type="match status" value="1"/>
</dbReference>
<organism>
    <name type="scientific">Rhodopseudomonas palustris (strain HaA2)</name>
    <dbReference type="NCBI Taxonomy" id="316058"/>
    <lineage>
        <taxon>Bacteria</taxon>
        <taxon>Pseudomonadati</taxon>
        <taxon>Pseudomonadota</taxon>
        <taxon>Alphaproteobacteria</taxon>
        <taxon>Hyphomicrobiales</taxon>
        <taxon>Nitrobacteraceae</taxon>
        <taxon>Rhodopseudomonas</taxon>
    </lineage>
</organism>
<feature type="chain" id="PRO_0000250326" description="Glycerol-3-phosphate acyltransferase">
    <location>
        <begin position="1"/>
        <end position="197"/>
    </location>
</feature>
<feature type="transmembrane region" description="Helical" evidence="1">
    <location>
        <begin position="5"/>
        <end position="25"/>
    </location>
</feature>
<feature type="transmembrane region" description="Helical" evidence="1">
    <location>
        <begin position="54"/>
        <end position="74"/>
    </location>
</feature>
<feature type="transmembrane region" description="Helical" evidence="1">
    <location>
        <begin position="80"/>
        <end position="100"/>
    </location>
</feature>
<feature type="transmembrane region" description="Helical" evidence="1">
    <location>
        <begin position="112"/>
        <end position="132"/>
    </location>
</feature>
<feature type="transmembrane region" description="Helical" evidence="1">
    <location>
        <begin position="153"/>
        <end position="173"/>
    </location>
</feature>
<evidence type="ECO:0000255" key="1">
    <source>
        <dbReference type="HAMAP-Rule" id="MF_01043"/>
    </source>
</evidence>
<protein>
    <recommendedName>
        <fullName evidence="1">Glycerol-3-phosphate acyltransferase</fullName>
    </recommendedName>
    <alternativeName>
        <fullName evidence="1">Acyl-PO4 G3P acyltransferase</fullName>
    </alternativeName>
    <alternativeName>
        <fullName evidence="1">Acyl-phosphate--glycerol-3-phosphate acyltransferase</fullName>
    </alternativeName>
    <alternativeName>
        <fullName evidence="1">G3P acyltransferase</fullName>
        <shortName evidence="1">GPAT</shortName>
        <ecNumber evidence="1">2.3.1.275</ecNumber>
    </alternativeName>
    <alternativeName>
        <fullName evidence="1">Lysophosphatidic acid synthase</fullName>
        <shortName evidence="1">LPA synthase</shortName>
    </alternativeName>
</protein>
<reference key="1">
    <citation type="submission" date="2006-01" db="EMBL/GenBank/DDBJ databases">
        <title>Complete sequence of Rhodopseudomonas palustris HaA2.</title>
        <authorList>
            <consortium name="US DOE Joint Genome Institute"/>
            <person name="Copeland A."/>
            <person name="Lucas S."/>
            <person name="Lapidus A."/>
            <person name="Barry K."/>
            <person name="Detter J.C."/>
            <person name="Glavina T."/>
            <person name="Hammon N."/>
            <person name="Israni S."/>
            <person name="Pitluck S."/>
            <person name="Chain P."/>
            <person name="Malfatti S."/>
            <person name="Shin M."/>
            <person name="Vergez L."/>
            <person name="Schmutz J."/>
            <person name="Larimer F."/>
            <person name="Land M."/>
            <person name="Hauser L."/>
            <person name="Pelletier D.A."/>
            <person name="Kyrpides N."/>
            <person name="Anderson I."/>
            <person name="Oda Y."/>
            <person name="Harwood C.S."/>
            <person name="Richardson P."/>
        </authorList>
    </citation>
    <scope>NUCLEOTIDE SEQUENCE [LARGE SCALE GENOMIC DNA]</scope>
    <source>
        <strain>HaA2</strain>
    </source>
</reference>
<name>PLSY_RHOP2</name>
<sequence>MLIGIYIAALLLGYLFGSIPFGLILTKIAGTEDLRSIGSGNIGATNVLRTGRKGLAAATLLLDALKGTAAVIIASSFGGAEAAMLAALGAFLGHLFPVWLKFKGGKGVAVYIGVLIGLFWPGAIVFCLLWLATAVTARYSSLSALVAAFITPIFLWWFGHPALASLFAVLTLLLFWMHRENIKRLQAGTESKIGEKK</sequence>